<reference key="1">
    <citation type="journal article" date="2003" name="Proc. Natl. Acad. Sci. U.S.A.">
        <title>The complete genome sequence of the Arabidopsis and tomato pathogen Pseudomonas syringae pv. tomato DC3000.</title>
        <authorList>
            <person name="Buell C.R."/>
            <person name="Joardar V."/>
            <person name="Lindeberg M."/>
            <person name="Selengut J."/>
            <person name="Paulsen I.T."/>
            <person name="Gwinn M.L."/>
            <person name="Dodson R.J."/>
            <person name="DeBoy R.T."/>
            <person name="Durkin A.S."/>
            <person name="Kolonay J.F."/>
            <person name="Madupu R."/>
            <person name="Daugherty S.C."/>
            <person name="Brinkac L.M."/>
            <person name="Beanan M.J."/>
            <person name="Haft D.H."/>
            <person name="Nelson W.C."/>
            <person name="Davidsen T.M."/>
            <person name="Zafar N."/>
            <person name="Zhou L."/>
            <person name="Liu J."/>
            <person name="Yuan Q."/>
            <person name="Khouri H.M."/>
            <person name="Fedorova N.B."/>
            <person name="Tran B."/>
            <person name="Russell D."/>
            <person name="Berry K.J."/>
            <person name="Utterback T.R."/>
            <person name="Van Aken S.E."/>
            <person name="Feldblyum T.V."/>
            <person name="D'Ascenzo M."/>
            <person name="Deng W.-L."/>
            <person name="Ramos A.R."/>
            <person name="Alfano J.R."/>
            <person name="Cartinhour S."/>
            <person name="Chatterjee A.K."/>
            <person name="Delaney T.P."/>
            <person name="Lazarowitz S.G."/>
            <person name="Martin G.B."/>
            <person name="Schneider D.J."/>
            <person name="Tang X."/>
            <person name="Bender C.L."/>
            <person name="White O."/>
            <person name="Fraser C.M."/>
            <person name="Collmer A."/>
        </authorList>
    </citation>
    <scope>NUCLEOTIDE SEQUENCE [LARGE SCALE GENOMIC DNA]</scope>
    <source>
        <strain>ATCC BAA-871 / DC3000</strain>
    </source>
</reference>
<organism>
    <name type="scientific">Pseudomonas syringae pv. tomato (strain ATCC BAA-871 / DC3000)</name>
    <dbReference type="NCBI Taxonomy" id="223283"/>
    <lineage>
        <taxon>Bacteria</taxon>
        <taxon>Pseudomonadati</taxon>
        <taxon>Pseudomonadota</taxon>
        <taxon>Gammaproteobacteria</taxon>
        <taxon>Pseudomonadales</taxon>
        <taxon>Pseudomonadaceae</taxon>
        <taxon>Pseudomonas</taxon>
    </lineage>
</organism>
<sequence>MYEGVQVSSKLEQLQGLLAPVVVALGYQCWGIDFSSQGKHSVLRIYIDKEGGVLVDDCAIVSRQISGVLDVEDPISTEYTLEVSSPGMERPLFTIEQFALYAGEQVRIKLRSPFEGRRNFQGLLRGVEEQDVVVQVEDHEFLLPIDLIDKANIIPTFD</sequence>
<evidence type="ECO:0000255" key="1">
    <source>
        <dbReference type="HAMAP-Rule" id="MF_01077"/>
    </source>
</evidence>
<gene>
    <name evidence="1" type="primary">rimP</name>
    <name type="ordered locus">PSPTO_4492</name>
</gene>
<dbReference type="EMBL" id="AE016853">
    <property type="protein sequence ID" value="AAO57940.1"/>
    <property type="molecule type" value="Genomic_DNA"/>
</dbReference>
<dbReference type="RefSeq" id="NP_794245.1">
    <property type="nucleotide sequence ID" value="NC_004578.1"/>
</dbReference>
<dbReference type="SMR" id="Q87WQ3"/>
<dbReference type="STRING" id="223283.PSPTO_4492"/>
<dbReference type="KEGG" id="pst:PSPTO_4492"/>
<dbReference type="PATRIC" id="fig|223283.9.peg.4608"/>
<dbReference type="eggNOG" id="COG0779">
    <property type="taxonomic scope" value="Bacteria"/>
</dbReference>
<dbReference type="HOGENOM" id="CLU_070525_1_1_6"/>
<dbReference type="OrthoDB" id="9805006at2"/>
<dbReference type="PhylomeDB" id="Q87WQ3"/>
<dbReference type="Proteomes" id="UP000002515">
    <property type="component" value="Chromosome"/>
</dbReference>
<dbReference type="GO" id="GO:0005829">
    <property type="term" value="C:cytosol"/>
    <property type="evidence" value="ECO:0007669"/>
    <property type="project" value="TreeGrafter"/>
</dbReference>
<dbReference type="GO" id="GO:0000028">
    <property type="term" value="P:ribosomal small subunit assembly"/>
    <property type="evidence" value="ECO:0007669"/>
    <property type="project" value="TreeGrafter"/>
</dbReference>
<dbReference type="GO" id="GO:0006412">
    <property type="term" value="P:translation"/>
    <property type="evidence" value="ECO:0007669"/>
    <property type="project" value="TreeGrafter"/>
</dbReference>
<dbReference type="CDD" id="cd01734">
    <property type="entry name" value="YlxS_C"/>
    <property type="match status" value="1"/>
</dbReference>
<dbReference type="FunFam" id="3.30.300.70:FF:000001">
    <property type="entry name" value="Ribosome maturation factor RimP"/>
    <property type="match status" value="1"/>
</dbReference>
<dbReference type="Gene3D" id="2.30.30.180">
    <property type="entry name" value="Ribosome maturation factor RimP, C-terminal domain"/>
    <property type="match status" value="1"/>
</dbReference>
<dbReference type="Gene3D" id="3.30.300.70">
    <property type="entry name" value="RimP-like superfamily, N-terminal"/>
    <property type="match status" value="1"/>
</dbReference>
<dbReference type="HAMAP" id="MF_01077">
    <property type="entry name" value="RimP"/>
    <property type="match status" value="1"/>
</dbReference>
<dbReference type="InterPro" id="IPR003728">
    <property type="entry name" value="Ribosome_maturation_RimP"/>
</dbReference>
<dbReference type="InterPro" id="IPR028998">
    <property type="entry name" value="RimP_C"/>
</dbReference>
<dbReference type="InterPro" id="IPR036847">
    <property type="entry name" value="RimP_C_sf"/>
</dbReference>
<dbReference type="InterPro" id="IPR028989">
    <property type="entry name" value="RimP_N"/>
</dbReference>
<dbReference type="InterPro" id="IPR035956">
    <property type="entry name" value="RimP_N_sf"/>
</dbReference>
<dbReference type="NCBIfam" id="NF000927">
    <property type="entry name" value="PRK00092.1-1"/>
    <property type="match status" value="1"/>
</dbReference>
<dbReference type="PANTHER" id="PTHR33867">
    <property type="entry name" value="RIBOSOME MATURATION FACTOR RIMP"/>
    <property type="match status" value="1"/>
</dbReference>
<dbReference type="PANTHER" id="PTHR33867:SF1">
    <property type="entry name" value="RIBOSOME MATURATION FACTOR RIMP"/>
    <property type="match status" value="1"/>
</dbReference>
<dbReference type="Pfam" id="PF17384">
    <property type="entry name" value="DUF150_C"/>
    <property type="match status" value="1"/>
</dbReference>
<dbReference type="Pfam" id="PF02576">
    <property type="entry name" value="RimP_N"/>
    <property type="match status" value="1"/>
</dbReference>
<dbReference type="SUPFAM" id="SSF74942">
    <property type="entry name" value="YhbC-like, C-terminal domain"/>
    <property type="match status" value="1"/>
</dbReference>
<dbReference type="SUPFAM" id="SSF75420">
    <property type="entry name" value="YhbC-like, N-terminal domain"/>
    <property type="match status" value="1"/>
</dbReference>
<proteinExistence type="inferred from homology"/>
<feature type="chain" id="PRO_0000181907" description="Ribosome maturation factor RimP">
    <location>
        <begin position="1"/>
        <end position="158"/>
    </location>
</feature>
<comment type="function">
    <text evidence="1">Required for maturation of 30S ribosomal subunits.</text>
</comment>
<comment type="subcellular location">
    <subcellularLocation>
        <location evidence="1">Cytoplasm</location>
    </subcellularLocation>
</comment>
<comment type="similarity">
    <text evidence="1">Belongs to the RimP family.</text>
</comment>
<keyword id="KW-0963">Cytoplasm</keyword>
<keyword id="KW-1185">Reference proteome</keyword>
<keyword id="KW-0690">Ribosome biogenesis</keyword>
<accession>Q87WQ3</accession>
<name>RIMP_PSESM</name>
<protein>
    <recommendedName>
        <fullName evidence="1">Ribosome maturation factor RimP</fullName>
    </recommendedName>
</protein>